<reference key="1">
    <citation type="journal article" date="2013" name="Nature">
        <title>The zebrafish reference genome sequence and its relationship to the human genome.</title>
        <authorList>
            <person name="Howe K."/>
            <person name="Clark M.D."/>
            <person name="Torroja C.F."/>
            <person name="Torrance J."/>
            <person name="Berthelot C."/>
            <person name="Muffato M."/>
            <person name="Collins J.E."/>
            <person name="Humphray S."/>
            <person name="McLaren K."/>
            <person name="Matthews L."/>
            <person name="McLaren S."/>
            <person name="Sealy I."/>
            <person name="Caccamo M."/>
            <person name="Churcher C."/>
            <person name="Scott C."/>
            <person name="Barrett J.C."/>
            <person name="Koch R."/>
            <person name="Rauch G.J."/>
            <person name="White S."/>
            <person name="Chow W."/>
            <person name="Kilian B."/>
            <person name="Quintais L.T."/>
            <person name="Guerra-Assuncao J.A."/>
            <person name="Zhou Y."/>
            <person name="Gu Y."/>
            <person name="Yen J."/>
            <person name="Vogel J.H."/>
            <person name="Eyre T."/>
            <person name="Redmond S."/>
            <person name="Banerjee R."/>
            <person name="Chi J."/>
            <person name="Fu B."/>
            <person name="Langley E."/>
            <person name="Maguire S.F."/>
            <person name="Laird G.K."/>
            <person name="Lloyd D."/>
            <person name="Kenyon E."/>
            <person name="Donaldson S."/>
            <person name="Sehra H."/>
            <person name="Almeida-King J."/>
            <person name="Loveland J."/>
            <person name="Trevanion S."/>
            <person name="Jones M."/>
            <person name="Quail M."/>
            <person name="Willey D."/>
            <person name="Hunt A."/>
            <person name="Burton J."/>
            <person name="Sims S."/>
            <person name="McLay K."/>
            <person name="Plumb B."/>
            <person name="Davis J."/>
            <person name="Clee C."/>
            <person name="Oliver K."/>
            <person name="Clark R."/>
            <person name="Riddle C."/>
            <person name="Elliot D."/>
            <person name="Threadgold G."/>
            <person name="Harden G."/>
            <person name="Ware D."/>
            <person name="Begum S."/>
            <person name="Mortimore B."/>
            <person name="Kerry G."/>
            <person name="Heath P."/>
            <person name="Phillimore B."/>
            <person name="Tracey A."/>
            <person name="Corby N."/>
            <person name="Dunn M."/>
            <person name="Johnson C."/>
            <person name="Wood J."/>
            <person name="Clark S."/>
            <person name="Pelan S."/>
            <person name="Griffiths G."/>
            <person name="Smith M."/>
            <person name="Glithero R."/>
            <person name="Howden P."/>
            <person name="Barker N."/>
            <person name="Lloyd C."/>
            <person name="Stevens C."/>
            <person name="Harley J."/>
            <person name="Holt K."/>
            <person name="Panagiotidis G."/>
            <person name="Lovell J."/>
            <person name="Beasley H."/>
            <person name="Henderson C."/>
            <person name="Gordon D."/>
            <person name="Auger K."/>
            <person name="Wright D."/>
            <person name="Collins J."/>
            <person name="Raisen C."/>
            <person name="Dyer L."/>
            <person name="Leung K."/>
            <person name="Robertson L."/>
            <person name="Ambridge K."/>
            <person name="Leongamornlert D."/>
            <person name="McGuire S."/>
            <person name="Gilderthorp R."/>
            <person name="Griffiths C."/>
            <person name="Manthravadi D."/>
            <person name="Nichol S."/>
            <person name="Barker G."/>
            <person name="Whitehead S."/>
            <person name="Kay M."/>
            <person name="Brown J."/>
            <person name="Murnane C."/>
            <person name="Gray E."/>
            <person name="Humphries M."/>
            <person name="Sycamore N."/>
            <person name="Barker D."/>
            <person name="Saunders D."/>
            <person name="Wallis J."/>
            <person name="Babbage A."/>
            <person name="Hammond S."/>
            <person name="Mashreghi-Mohammadi M."/>
            <person name="Barr L."/>
            <person name="Martin S."/>
            <person name="Wray P."/>
            <person name="Ellington A."/>
            <person name="Matthews N."/>
            <person name="Ellwood M."/>
            <person name="Woodmansey R."/>
            <person name="Clark G."/>
            <person name="Cooper J."/>
            <person name="Tromans A."/>
            <person name="Grafham D."/>
            <person name="Skuce C."/>
            <person name="Pandian R."/>
            <person name="Andrews R."/>
            <person name="Harrison E."/>
            <person name="Kimberley A."/>
            <person name="Garnett J."/>
            <person name="Fosker N."/>
            <person name="Hall R."/>
            <person name="Garner P."/>
            <person name="Kelly D."/>
            <person name="Bird C."/>
            <person name="Palmer S."/>
            <person name="Gehring I."/>
            <person name="Berger A."/>
            <person name="Dooley C.M."/>
            <person name="Ersan-Urun Z."/>
            <person name="Eser C."/>
            <person name="Geiger H."/>
            <person name="Geisler M."/>
            <person name="Karotki L."/>
            <person name="Kirn A."/>
            <person name="Konantz J."/>
            <person name="Konantz M."/>
            <person name="Oberlander M."/>
            <person name="Rudolph-Geiger S."/>
            <person name="Teucke M."/>
            <person name="Lanz C."/>
            <person name="Raddatz G."/>
            <person name="Osoegawa K."/>
            <person name="Zhu B."/>
            <person name="Rapp A."/>
            <person name="Widaa S."/>
            <person name="Langford C."/>
            <person name="Yang F."/>
            <person name="Schuster S.C."/>
            <person name="Carter N.P."/>
            <person name="Harrow J."/>
            <person name="Ning Z."/>
            <person name="Herrero J."/>
            <person name="Searle S.M."/>
            <person name="Enright A."/>
            <person name="Geisler R."/>
            <person name="Plasterk R.H."/>
            <person name="Lee C."/>
            <person name="Westerfield M."/>
            <person name="de Jong P.J."/>
            <person name="Zon L.I."/>
            <person name="Postlethwait J.H."/>
            <person name="Nusslein-Volhard C."/>
            <person name="Hubbard T.J."/>
            <person name="Roest Crollius H."/>
            <person name="Rogers J."/>
            <person name="Stemple D.L."/>
        </authorList>
    </citation>
    <scope>NUCLEOTIDE SEQUENCE [LARGE SCALE GENOMIC DNA]</scope>
    <source>
        <strain>Tuebingen</strain>
    </source>
</reference>
<feature type="chain" id="PRO_0000390971" description="Rab11 family-interacting protein 3">
    <location>
        <begin position="1"/>
        <end position="1183"/>
    </location>
</feature>
<feature type="domain" description="EF-hand 1" evidence="4">
    <location>
        <begin position="706"/>
        <end position="741"/>
    </location>
</feature>
<feature type="domain" description="EF-hand 2" evidence="4">
    <location>
        <begin position="738"/>
        <end position="773"/>
    </location>
</feature>
<feature type="domain" description="FIP-RBD" evidence="5">
    <location>
        <begin position="1121"/>
        <end position="1183"/>
    </location>
</feature>
<feature type="region of interest" description="Disordered" evidence="6">
    <location>
        <begin position="423"/>
        <end position="448"/>
    </location>
</feature>
<feature type="region of interest" description="ARF-binding domain (ABD)" evidence="1">
    <location>
        <begin position="911"/>
        <end position="1015"/>
    </location>
</feature>
<feature type="region of interest" description="Disordered" evidence="6">
    <location>
        <begin position="1005"/>
        <end position="1044"/>
    </location>
</feature>
<feature type="coiled-coil region" evidence="3">
    <location>
        <begin position="902"/>
        <end position="1121"/>
    </location>
</feature>
<feature type="compositionally biased region" description="Basic and acidic residues" evidence="6">
    <location>
        <begin position="431"/>
        <end position="441"/>
    </location>
</feature>
<feature type="binding site" evidence="7">
    <location>
        <position position="719"/>
    </location>
    <ligand>
        <name>Ca(2+)</name>
        <dbReference type="ChEBI" id="CHEBI:29108"/>
        <label>1</label>
    </ligand>
</feature>
<feature type="binding site" evidence="7">
    <location>
        <position position="721"/>
    </location>
    <ligand>
        <name>Ca(2+)</name>
        <dbReference type="ChEBI" id="CHEBI:29108"/>
        <label>1</label>
    </ligand>
</feature>
<feature type="binding site" evidence="7">
    <location>
        <position position="723"/>
    </location>
    <ligand>
        <name>Ca(2+)</name>
        <dbReference type="ChEBI" id="CHEBI:29108"/>
        <label>1</label>
    </ligand>
</feature>
<feature type="binding site" evidence="7">
    <location>
        <position position="730"/>
    </location>
    <ligand>
        <name>Ca(2+)</name>
        <dbReference type="ChEBI" id="CHEBI:29108"/>
        <label>1</label>
    </ligand>
</feature>
<feature type="binding site" evidence="7">
    <location>
        <position position="751"/>
    </location>
    <ligand>
        <name>Ca(2+)</name>
        <dbReference type="ChEBI" id="CHEBI:29108"/>
        <label>2</label>
    </ligand>
</feature>
<feature type="binding site" evidence="7">
    <location>
        <position position="753"/>
    </location>
    <ligand>
        <name>Ca(2+)</name>
        <dbReference type="ChEBI" id="CHEBI:29108"/>
        <label>2</label>
    </ligand>
</feature>
<feature type="binding site" evidence="7">
    <location>
        <position position="762"/>
    </location>
    <ligand>
        <name>Ca(2+)</name>
        <dbReference type="ChEBI" id="CHEBI:29108"/>
        <label>2</label>
    </ligand>
</feature>
<organism>
    <name type="scientific">Danio rerio</name>
    <name type="common">Zebrafish</name>
    <name type="synonym">Brachydanio rerio</name>
    <dbReference type="NCBI Taxonomy" id="7955"/>
    <lineage>
        <taxon>Eukaryota</taxon>
        <taxon>Metazoa</taxon>
        <taxon>Chordata</taxon>
        <taxon>Craniata</taxon>
        <taxon>Vertebrata</taxon>
        <taxon>Euteleostomi</taxon>
        <taxon>Actinopterygii</taxon>
        <taxon>Neopterygii</taxon>
        <taxon>Teleostei</taxon>
        <taxon>Ostariophysi</taxon>
        <taxon>Cypriniformes</taxon>
        <taxon>Danionidae</taxon>
        <taxon>Danioninae</taxon>
        <taxon>Danio</taxon>
    </lineage>
</organism>
<comment type="function">
    <text evidence="2">Downstream effector molecule for Rab11 GTPase which acts as a regulator of endocytic trafficking, cytokinesis and intracellular ciliogenesis by participating in membrane delivery.</text>
</comment>
<comment type="subcellular location">
    <subcellularLocation>
        <location evidence="2">Recycling endosome membrane</location>
        <topology evidence="7">Peripheral membrane protein</topology>
    </subcellularLocation>
    <subcellularLocation>
        <location evidence="2">Cytoplasm</location>
        <location evidence="2">Cytoskeleton</location>
        <location evidence="2">Microtubule organizing center</location>
        <location evidence="2">Centrosome</location>
    </subcellularLocation>
    <subcellularLocation>
        <location evidence="2">Cleavage furrow</location>
    </subcellularLocation>
    <subcellularLocation>
        <location evidence="2">Midbody</location>
    </subcellularLocation>
    <subcellularLocation>
        <location evidence="2">Golgi apparatus membrane</location>
        <topology evidence="7">Peripheral membrane protein</topology>
    </subcellularLocation>
    <subcellularLocation>
        <location evidence="2">Golgi apparatus</location>
        <location evidence="2">trans-Golgi network membrane</location>
        <topology evidence="7">Peripheral membrane protein</topology>
    </subcellularLocation>
</comment>
<comment type="domain">
    <text evidence="2">The RBD-FIP domain mediates the interaction with Rab11 (rab11a or rab11b).</text>
</comment>
<accession>Q7T005</accession>
<name>RFIP3_DANRE</name>
<dbReference type="EMBL" id="AL772148">
    <property type="protein sequence ID" value="CAE30388.1"/>
    <property type="molecule type" value="Genomic_DNA"/>
</dbReference>
<dbReference type="SMR" id="Q7T005"/>
<dbReference type="FunCoup" id="Q7T005">
    <property type="interactions" value="7"/>
</dbReference>
<dbReference type="Ensembl" id="ENSDART00000136836">
    <property type="protein sequence ID" value="ENSDARP00000120017"/>
    <property type="gene ID" value="ENSDARG00000016490"/>
</dbReference>
<dbReference type="AGR" id="ZFIN:ZDB-GENE-040724-138"/>
<dbReference type="ZFIN" id="ZDB-GENE-040724-138">
    <property type="gene designation" value="rab11fip3"/>
</dbReference>
<dbReference type="eggNOG" id="KOG0982">
    <property type="taxonomic scope" value="Eukaryota"/>
</dbReference>
<dbReference type="HOGENOM" id="CLU_272729_0_0_1"/>
<dbReference type="InParanoid" id="Q7T005"/>
<dbReference type="OrthoDB" id="418358at2759"/>
<dbReference type="Reactome" id="R-DRE-5620916">
    <property type="pathway name" value="VxPx cargo-targeting to cilium"/>
</dbReference>
<dbReference type="PRO" id="PR:Q7T005"/>
<dbReference type="Proteomes" id="UP000000437">
    <property type="component" value="Unplaced"/>
</dbReference>
<dbReference type="Bgee" id="ENSDARG00000016490">
    <property type="expression patterns" value="Expressed in retina and 18 other cell types or tissues"/>
</dbReference>
<dbReference type="ExpressionAtlas" id="Q7T005">
    <property type="expression patterns" value="baseline"/>
</dbReference>
<dbReference type="GO" id="GO:0005813">
    <property type="term" value="C:centrosome"/>
    <property type="evidence" value="ECO:0000250"/>
    <property type="project" value="UniProtKB"/>
</dbReference>
<dbReference type="GO" id="GO:0032154">
    <property type="term" value="C:cleavage furrow"/>
    <property type="evidence" value="ECO:0000250"/>
    <property type="project" value="UniProtKB"/>
</dbReference>
<dbReference type="GO" id="GO:0030139">
    <property type="term" value="C:endocytic vesicle"/>
    <property type="evidence" value="ECO:0000318"/>
    <property type="project" value="GO_Central"/>
</dbReference>
<dbReference type="GO" id="GO:0030666">
    <property type="term" value="C:endocytic vesicle membrane"/>
    <property type="evidence" value="ECO:0000250"/>
    <property type="project" value="UniProtKB"/>
</dbReference>
<dbReference type="GO" id="GO:0005768">
    <property type="term" value="C:endosome"/>
    <property type="evidence" value="ECO:0000250"/>
    <property type="project" value="UniProtKB"/>
</dbReference>
<dbReference type="GO" id="GO:0000139">
    <property type="term" value="C:Golgi membrane"/>
    <property type="evidence" value="ECO:0000250"/>
    <property type="project" value="UniProtKB"/>
</dbReference>
<dbReference type="GO" id="GO:0030496">
    <property type="term" value="C:midbody"/>
    <property type="evidence" value="ECO:0000250"/>
    <property type="project" value="UniProtKB"/>
</dbReference>
<dbReference type="GO" id="GO:0055037">
    <property type="term" value="C:recycling endosome"/>
    <property type="evidence" value="ECO:0000250"/>
    <property type="project" value="UniProtKB"/>
</dbReference>
<dbReference type="GO" id="GO:0055038">
    <property type="term" value="C:recycling endosome membrane"/>
    <property type="evidence" value="ECO:0000318"/>
    <property type="project" value="GO_Central"/>
</dbReference>
<dbReference type="GO" id="GO:0032588">
    <property type="term" value="C:trans-Golgi network membrane"/>
    <property type="evidence" value="ECO:0000250"/>
    <property type="project" value="UniProtKB"/>
</dbReference>
<dbReference type="GO" id="GO:0005509">
    <property type="term" value="F:calcium ion binding"/>
    <property type="evidence" value="ECO:0007669"/>
    <property type="project" value="InterPro"/>
</dbReference>
<dbReference type="GO" id="GO:0060090">
    <property type="term" value="F:molecular adaptor activity"/>
    <property type="evidence" value="ECO:0000250"/>
    <property type="project" value="UniProtKB"/>
</dbReference>
<dbReference type="GO" id="GO:0042803">
    <property type="term" value="F:protein homodimerization activity"/>
    <property type="evidence" value="ECO:0000250"/>
    <property type="project" value="UniProtKB"/>
</dbReference>
<dbReference type="GO" id="GO:0031267">
    <property type="term" value="F:small GTPase binding"/>
    <property type="evidence" value="ECO:0000250"/>
    <property type="project" value="UniProtKB"/>
</dbReference>
<dbReference type="GO" id="GO:0051301">
    <property type="term" value="P:cell division"/>
    <property type="evidence" value="ECO:0007669"/>
    <property type="project" value="UniProtKB-KW"/>
</dbReference>
<dbReference type="GO" id="GO:0032456">
    <property type="term" value="P:endocytic recycling"/>
    <property type="evidence" value="ECO:0000250"/>
    <property type="project" value="UniProtKB"/>
</dbReference>
<dbReference type="GO" id="GO:0061512">
    <property type="term" value="P:protein localization to cilium"/>
    <property type="evidence" value="ECO:0000250"/>
    <property type="project" value="UniProtKB"/>
</dbReference>
<dbReference type="GO" id="GO:1902017">
    <property type="term" value="P:regulation of cilium assembly"/>
    <property type="evidence" value="ECO:0000250"/>
    <property type="project" value="UniProtKB"/>
</dbReference>
<dbReference type="GO" id="GO:0032465">
    <property type="term" value="P:regulation of cytokinesis"/>
    <property type="evidence" value="ECO:0000250"/>
    <property type="project" value="UniProtKB"/>
</dbReference>
<dbReference type="GO" id="GO:2001135">
    <property type="term" value="P:regulation of endocytic recycling"/>
    <property type="evidence" value="ECO:0000250"/>
    <property type="project" value="UniProtKB"/>
</dbReference>
<dbReference type="GO" id="GO:1904779">
    <property type="term" value="P:regulation of protein localization to centrosome"/>
    <property type="evidence" value="ECO:0000250"/>
    <property type="project" value="UniProtKB"/>
</dbReference>
<dbReference type="CDD" id="cd00051">
    <property type="entry name" value="EFh"/>
    <property type="match status" value="1"/>
</dbReference>
<dbReference type="FunFam" id="1.20.5.2440:FF:000001">
    <property type="entry name" value="RAB11 family interacting protein 4"/>
    <property type="match status" value="1"/>
</dbReference>
<dbReference type="Gene3D" id="1.20.5.2440">
    <property type="match status" value="1"/>
</dbReference>
<dbReference type="Gene3D" id="1.10.238.10">
    <property type="entry name" value="EF-hand"/>
    <property type="match status" value="1"/>
</dbReference>
<dbReference type="InterPro" id="IPR011992">
    <property type="entry name" value="EF-hand-dom_pair"/>
</dbReference>
<dbReference type="InterPro" id="IPR002048">
    <property type="entry name" value="EF_hand_dom"/>
</dbReference>
<dbReference type="InterPro" id="IPR037245">
    <property type="entry name" value="FIP-RBD_C_sf"/>
</dbReference>
<dbReference type="InterPro" id="IPR019018">
    <property type="entry name" value="Rab-bd_FIP-RBD"/>
</dbReference>
<dbReference type="InterPro" id="IPR051977">
    <property type="entry name" value="Rab11-interacting_regulator"/>
</dbReference>
<dbReference type="PANTHER" id="PTHR15726:SF6">
    <property type="entry name" value="RAB11 FAMILY-INTERACTING PROTEIN 3"/>
    <property type="match status" value="1"/>
</dbReference>
<dbReference type="PANTHER" id="PTHR15726">
    <property type="entry name" value="RAB11-FAMILY INTERACTING PROTEIN"/>
    <property type="match status" value="1"/>
</dbReference>
<dbReference type="Pfam" id="PF13499">
    <property type="entry name" value="EF-hand_7"/>
    <property type="match status" value="1"/>
</dbReference>
<dbReference type="Pfam" id="PF25450">
    <property type="entry name" value="Rab11-FIP3"/>
    <property type="match status" value="1"/>
</dbReference>
<dbReference type="Pfam" id="PF09457">
    <property type="entry name" value="RBD-FIP"/>
    <property type="match status" value="1"/>
</dbReference>
<dbReference type="SMART" id="SM00054">
    <property type="entry name" value="EFh"/>
    <property type="match status" value="2"/>
</dbReference>
<dbReference type="SUPFAM" id="SSF47473">
    <property type="entry name" value="EF-hand"/>
    <property type="match status" value="1"/>
</dbReference>
<dbReference type="SUPFAM" id="SSF144270">
    <property type="entry name" value="Eferin C-derminal domain-like"/>
    <property type="match status" value="1"/>
</dbReference>
<dbReference type="PROSITE" id="PS50222">
    <property type="entry name" value="EF_HAND_2"/>
    <property type="match status" value="2"/>
</dbReference>
<dbReference type="PROSITE" id="PS51511">
    <property type="entry name" value="FIP_RBD"/>
    <property type="match status" value="1"/>
</dbReference>
<protein>
    <recommendedName>
        <fullName>Rab11 family-interacting protein 3</fullName>
        <shortName>FIP3-Rab11</shortName>
        <shortName>Rab11-FIP3</shortName>
    </recommendedName>
</protein>
<evidence type="ECO:0000250" key="1"/>
<evidence type="ECO:0000250" key="2">
    <source>
        <dbReference type="UniProtKB" id="O75154"/>
    </source>
</evidence>
<evidence type="ECO:0000255" key="3"/>
<evidence type="ECO:0000255" key="4">
    <source>
        <dbReference type="PROSITE-ProRule" id="PRU00448"/>
    </source>
</evidence>
<evidence type="ECO:0000255" key="5">
    <source>
        <dbReference type="PROSITE-ProRule" id="PRU00844"/>
    </source>
</evidence>
<evidence type="ECO:0000256" key="6">
    <source>
        <dbReference type="SAM" id="MobiDB-lite"/>
    </source>
</evidence>
<evidence type="ECO:0000305" key="7"/>
<sequence>MEQVLSSPQGCSEWEVNGKTEWESDQNPLGFLLVDKENSSVADPTNEIFQENAINLDDLFWASQTYSWENGLDCVYPEWKAQPPPSQDLKGDGNSGISQLVEGDLICFNSRSASPSLADRPVQDNNLYDHAEQVEVTATSSTLNVCTGELGINAPTLHTDKTLLQDTHLMLEESHLTNCEFSCNSGVENESQNFLSHGTRNILESEGLFAVSPVEVSCVDTNSNPKPTIVCQTPPLASEHIYLSSSALPCEPVFPMTCTKPHVPPYHAGSATLPMDEVEMMLPKLQGGEGESSKPSANNRTLEPQRLDANTDTTHLSVCPLGESDISPEHCEEMLHELSTKCTVEMVEEEVNKKSVSSNTTNTAFSKPKTELCEELSGCTLGVLLETVSGDVKEEAASDSRTDHVFPETQTDLAPVALIDSQAEDPSTESLPRKNGQEESKSALPVSTPEHNALFELSSGNVVLPEDHSQSTFSAQTQALSEVDHDGDLTPDGMLTDNIVCEAVTSIDSVILSLTDSFELPKLSDCDLSSHDFESHALTLEIQNNVTCVQTGSVDNNPEEMSTPFTCTDNQLTVTGGLAGLDLTETTSQSGEASGEGEAGLPVLPTHQEDFHQLTPSEINLAQEQQVSSVVPSSPPSHRDVFPCGASLDGEAYLTLMENNPDTLKHAEMTLDLCKASDALPTKSLQIAPVDLIHVPIVSATAPRSEEQSALRAVFQALDQDGDGFVHIEEFIEFAKAYGAEQVKDLTRFLDPSGLGVISFEDFHRGISAISNEESAYSECETFTDEDTTALVHPELHEDVETDSGIENTLTDGDDRNSPSSFPASFQNFLQSEALEFFCTHCHKQISRLEDLSTRLQLLEMNRHLQQSNNLDVMGDLTQDILDLADRDITDKVLLLEKRVCELEKDSLESEEQHARLRQENLTLVHRANALEEQLKEQELRTEEDLLAQTRKHRDALNKLQRERDLEIENLQARLHQLDEENSELRSCVPCLRANIERLEEEKRKLQDEADDITQRLNEESESRRKMSDKLSHERHTNQKEKECTQGLIEDLRKQLEHLQLFKLETEARRGRSSSNGLQEYNTHMRENELEQEIRRLKQDNRSLKEQNDELNGQIINLSIQGAKSLFTESLSESLAAEINNVSRAELMEAIHKQEEINFRLQDYIDRIIVAIMESNPSILEVK</sequence>
<gene>
    <name type="primary">rab11fip3</name>
    <name type="ORF">si:ch211-153c20.4</name>
</gene>
<proteinExistence type="inferred from homology"/>
<keyword id="KW-0106">Calcium</keyword>
<keyword id="KW-0131">Cell cycle</keyword>
<keyword id="KW-0132">Cell division</keyword>
<keyword id="KW-0175">Coiled coil</keyword>
<keyword id="KW-0963">Cytoplasm</keyword>
<keyword id="KW-0206">Cytoskeleton</keyword>
<keyword id="KW-0967">Endosome</keyword>
<keyword id="KW-0333">Golgi apparatus</keyword>
<keyword id="KW-0472">Membrane</keyword>
<keyword id="KW-0479">Metal-binding</keyword>
<keyword id="KW-1185">Reference proteome</keyword>
<keyword id="KW-0677">Repeat</keyword>
<keyword id="KW-0813">Transport</keyword>